<organism>
    <name type="scientific">Bacillus anthracis</name>
    <dbReference type="NCBI Taxonomy" id="1392"/>
    <lineage>
        <taxon>Bacteria</taxon>
        <taxon>Bacillati</taxon>
        <taxon>Bacillota</taxon>
        <taxon>Bacilli</taxon>
        <taxon>Bacillales</taxon>
        <taxon>Bacillaceae</taxon>
        <taxon>Bacillus</taxon>
        <taxon>Bacillus cereus group</taxon>
    </lineage>
</organism>
<reference key="1">
    <citation type="journal article" date="2003" name="Nature">
        <title>The genome sequence of Bacillus anthracis Ames and comparison to closely related bacteria.</title>
        <authorList>
            <person name="Read T.D."/>
            <person name="Peterson S.N."/>
            <person name="Tourasse N.J."/>
            <person name="Baillie L.W."/>
            <person name="Paulsen I.T."/>
            <person name="Nelson K.E."/>
            <person name="Tettelin H."/>
            <person name="Fouts D.E."/>
            <person name="Eisen J.A."/>
            <person name="Gill S.R."/>
            <person name="Holtzapple E.K."/>
            <person name="Okstad O.A."/>
            <person name="Helgason E."/>
            <person name="Rilstone J."/>
            <person name="Wu M."/>
            <person name="Kolonay J.F."/>
            <person name="Beanan M.J."/>
            <person name="Dodson R.J."/>
            <person name="Brinkac L.M."/>
            <person name="Gwinn M.L."/>
            <person name="DeBoy R.T."/>
            <person name="Madpu R."/>
            <person name="Daugherty S.C."/>
            <person name="Durkin A.S."/>
            <person name="Haft D.H."/>
            <person name="Nelson W.C."/>
            <person name="Peterson J.D."/>
            <person name="Pop M."/>
            <person name="Khouri H.M."/>
            <person name="Radune D."/>
            <person name="Benton J.L."/>
            <person name="Mahamoud Y."/>
            <person name="Jiang L."/>
            <person name="Hance I.R."/>
            <person name="Weidman J.F."/>
            <person name="Berry K.J."/>
            <person name="Plaut R.D."/>
            <person name="Wolf A.M."/>
            <person name="Watkins K.L."/>
            <person name="Nierman W.C."/>
            <person name="Hazen A."/>
            <person name="Cline R.T."/>
            <person name="Redmond C."/>
            <person name="Thwaite J.E."/>
            <person name="White O."/>
            <person name="Salzberg S.L."/>
            <person name="Thomason B."/>
            <person name="Friedlander A.M."/>
            <person name="Koehler T.M."/>
            <person name="Hanna P.C."/>
            <person name="Kolstoe A.-B."/>
            <person name="Fraser C.M."/>
        </authorList>
    </citation>
    <scope>NUCLEOTIDE SEQUENCE [LARGE SCALE GENOMIC DNA]</scope>
    <source>
        <strain>Ames / isolate Porton</strain>
    </source>
</reference>
<reference key="2">
    <citation type="journal article" date="2009" name="J. Bacteriol.">
        <title>The complete genome sequence of Bacillus anthracis Ames 'Ancestor'.</title>
        <authorList>
            <person name="Ravel J."/>
            <person name="Jiang L."/>
            <person name="Stanley S.T."/>
            <person name="Wilson M.R."/>
            <person name="Decker R.S."/>
            <person name="Read T.D."/>
            <person name="Worsham P."/>
            <person name="Keim P.S."/>
            <person name="Salzberg S.L."/>
            <person name="Fraser-Liggett C.M."/>
            <person name="Rasko D.A."/>
        </authorList>
    </citation>
    <scope>NUCLEOTIDE SEQUENCE [LARGE SCALE GENOMIC DNA]</scope>
    <source>
        <strain>Ames ancestor</strain>
    </source>
</reference>
<reference key="3">
    <citation type="submission" date="2004-01" db="EMBL/GenBank/DDBJ databases">
        <title>Complete genome sequence of Bacillus anthracis Sterne.</title>
        <authorList>
            <person name="Brettin T.S."/>
            <person name="Bruce D."/>
            <person name="Challacombe J.F."/>
            <person name="Gilna P."/>
            <person name="Han C."/>
            <person name="Hill K."/>
            <person name="Hitchcock P."/>
            <person name="Jackson P."/>
            <person name="Keim P."/>
            <person name="Longmire J."/>
            <person name="Lucas S."/>
            <person name="Okinaka R."/>
            <person name="Richardson P."/>
            <person name="Rubin E."/>
            <person name="Tice H."/>
        </authorList>
    </citation>
    <scope>NUCLEOTIDE SEQUENCE [LARGE SCALE GENOMIC DNA]</scope>
    <source>
        <strain>Sterne</strain>
    </source>
</reference>
<gene>
    <name type="primary">murB1</name>
    <name type="synonym">murB-1</name>
    <name type="ordered locus">BA_4048</name>
    <name type="ordered locus">GBAA_4048</name>
    <name type="ordered locus">BAS3760</name>
</gene>
<comment type="function">
    <text evidence="1">Cell wall formation.</text>
</comment>
<comment type="catalytic activity">
    <reaction>
        <text>UDP-N-acetyl-alpha-D-muramate + NADP(+) = UDP-N-acetyl-3-O-(1-carboxyvinyl)-alpha-D-glucosamine + NADPH + H(+)</text>
        <dbReference type="Rhea" id="RHEA:12248"/>
        <dbReference type="ChEBI" id="CHEBI:15378"/>
        <dbReference type="ChEBI" id="CHEBI:57783"/>
        <dbReference type="ChEBI" id="CHEBI:58349"/>
        <dbReference type="ChEBI" id="CHEBI:68483"/>
        <dbReference type="ChEBI" id="CHEBI:70757"/>
        <dbReference type="EC" id="1.3.1.98"/>
    </reaction>
</comment>
<comment type="cofactor">
    <cofactor evidence="1">
        <name>FAD</name>
        <dbReference type="ChEBI" id="CHEBI:57692"/>
    </cofactor>
</comment>
<comment type="pathway">
    <text>Cell wall biogenesis; peptidoglycan biosynthesis.</text>
</comment>
<comment type="subcellular location">
    <subcellularLocation>
        <location evidence="1">Cytoplasm</location>
    </subcellularLocation>
</comment>
<comment type="similarity">
    <text evidence="2">Belongs to the MurB family.</text>
</comment>
<dbReference type="EC" id="1.3.1.98"/>
<dbReference type="EMBL" id="AE016879">
    <property type="protein sequence ID" value="AAP27774.1"/>
    <property type="molecule type" value="Genomic_DNA"/>
</dbReference>
<dbReference type="EMBL" id="AE017334">
    <property type="protein sequence ID" value="AAT33165.1"/>
    <property type="molecule type" value="Genomic_DNA"/>
</dbReference>
<dbReference type="EMBL" id="AE017225">
    <property type="protein sequence ID" value="AAT56062.1"/>
    <property type="molecule type" value="Genomic_DNA"/>
</dbReference>
<dbReference type="RefSeq" id="NP_846288.1">
    <property type="nucleotide sequence ID" value="NC_003997.3"/>
</dbReference>
<dbReference type="RefSeq" id="YP_030011.1">
    <property type="nucleotide sequence ID" value="NC_005945.1"/>
</dbReference>
<dbReference type="SMR" id="Q81WD1"/>
<dbReference type="STRING" id="261594.GBAA_4048"/>
<dbReference type="GeneID" id="45023738"/>
<dbReference type="KEGG" id="ban:BA_4048"/>
<dbReference type="KEGG" id="banh:HYU01_19795"/>
<dbReference type="KEGG" id="bar:GBAA_4048"/>
<dbReference type="KEGG" id="bat:BAS3760"/>
<dbReference type="PATRIC" id="fig|198094.11.peg.4019"/>
<dbReference type="eggNOG" id="COG0812">
    <property type="taxonomic scope" value="Bacteria"/>
</dbReference>
<dbReference type="HOGENOM" id="CLU_035304_1_1_9"/>
<dbReference type="OMA" id="YRHSRFK"/>
<dbReference type="OrthoDB" id="9804753at2"/>
<dbReference type="UniPathway" id="UPA00219"/>
<dbReference type="Proteomes" id="UP000000427">
    <property type="component" value="Chromosome"/>
</dbReference>
<dbReference type="Proteomes" id="UP000000594">
    <property type="component" value="Chromosome"/>
</dbReference>
<dbReference type="GO" id="GO:0005829">
    <property type="term" value="C:cytosol"/>
    <property type="evidence" value="ECO:0007669"/>
    <property type="project" value="TreeGrafter"/>
</dbReference>
<dbReference type="GO" id="GO:0071949">
    <property type="term" value="F:FAD binding"/>
    <property type="evidence" value="ECO:0007669"/>
    <property type="project" value="InterPro"/>
</dbReference>
<dbReference type="GO" id="GO:0008762">
    <property type="term" value="F:UDP-N-acetylmuramate dehydrogenase activity"/>
    <property type="evidence" value="ECO:0007669"/>
    <property type="project" value="UniProtKB-UniRule"/>
</dbReference>
<dbReference type="GO" id="GO:0051301">
    <property type="term" value="P:cell division"/>
    <property type="evidence" value="ECO:0007669"/>
    <property type="project" value="UniProtKB-KW"/>
</dbReference>
<dbReference type="GO" id="GO:0071555">
    <property type="term" value="P:cell wall organization"/>
    <property type="evidence" value="ECO:0007669"/>
    <property type="project" value="UniProtKB-KW"/>
</dbReference>
<dbReference type="GO" id="GO:0009252">
    <property type="term" value="P:peptidoglycan biosynthetic process"/>
    <property type="evidence" value="ECO:0007669"/>
    <property type="project" value="UniProtKB-UniRule"/>
</dbReference>
<dbReference type="GO" id="GO:0008360">
    <property type="term" value="P:regulation of cell shape"/>
    <property type="evidence" value="ECO:0007669"/>
    <property type="project" value="UniProtKB-KW"/>
</dbReference>
<dbReference type="Gene3D" id="3.30.465.10">
    <property type="match status" value="1"/>
</dbReference>
<dbReference type="Gene3D" id="3.90.78.10">
    <property type="entry name" value="UDP-N-acetylenolpyruvoylglucosamine reductase, C-terminal domain"/>
    <property type="match status" value="1"/>
</dbReference>
<dbReference type="Gene3D" id="3.30.43.10">
    <property type="entry name" value="Uridine Diphospho-n-acetylenolpyruvylglucosamine Reductase, domain 2"/>
    <property type="match status" value="1"/>
</dbReference>
<dbReference type="HAMAP" id="MF_00037">
    <property type="entry name" value="MurB"/>
    <property type="match status" value="1"/>
</dbReference>
<dbReference type="InterPro" id="IPR016166">
    <property type="entry name" value="FAD-bd_PCMH"/>
</dbReference>
<dbReference type="InterPro" id="IPR036318">
    <property type="entry name" value="FAD-bd_PCMH-like_sf"/>
</dbReference>
<dbReference type="InterPro" id="IPR016167">
    <property type="entry name" value="FAD-bd_PCMH_sub1"/>
</dbReference>
<dbReference type="InterPro" id="IPR016169">
    <property type="entry name" value="FAD-bd_PCMH_sub2"/>
</dbReference>
<dbReference type="InterPro" id="IPR003170">
    <property type="entry name" value="MurB"/>
</dbReference>
<dbReference type="InterPro" id="IPR011601">
    <property type="entry name" value="MurB_C"/>
</dbReference>
<dbReference type="InterPro" id="IPR036635">
    <property type="entry name" value="MurB_C_sf"/>
</dbReference>
<dbReference type="InterPro" id="IPR006094">
    <property type="entry name" value="Oxid_FAD_bind_N"/>
</dbReference>
<dbReference type="NCBIfam" id="TIGR00179">
    <property type="entry name" value="murB"/>
    <property type="match status" value="1"/>
</dbReference>
<dbReference type="NCBIfam" id="NF010480">
    <property type="entry name" value="PRK13905.1"/>
    <property type="match status" value="1"/>
</dbReference>
<dbReference type="PANTHER" id="PTHR21071">
    <property type="entry name" value="UDP-N-ACETYLENOLPYRUVOYLGLUCOSAMINE REDUCTASE"/>
    <property type="match status" value="1"/>
</dbReference>
<dbReference type="PANTHER" id="PTHR21071:SF5">
    <property type="entry name" value="UDP-N-ACETYLENOLPYRUVOYLGLUCOSAMINE REDUCTASE"/>
    <property type="match status" value="1"/>
</dbReference>
<dbReference type="Pfam" id="PF01565">
    <property type="entry name" value="FAD_binding_4"/>
    <property type="match status" value="1"/>
</dbReference>
<dbReference type="Pfam" id="PF02873">
    <property type="entry name" value="MurB_C"/>
    <property type="match status" value="1"/>
</dbReference>
<dbReference type="SUPFAM" id="SSF56176">
    <property type="entry name" value="FAD-binding/transporter-associated domain-like"/>
    <property type="match status" value="1"/>
</dbReference>
<dbReference type="SUPFAM" id="SSF56194">
    <property type="entry name" value="Uridine diphospho-N-Acetylenolpyruvylglucosamine reductase, MurB, C-terminal domain"/>
    <property type="match status" value="1"/>
</dbReference>
<dbReference type="PROSITE" id="PS51387">
    <property type="entry name" value="FAD_PCMH"/>
    <property type="match status" value="1"/>
</dbReference>
<proteinExistence type="inferred from homology"/>
<name>MURB1_BACAN</name>
<evidence type="ECO:0000250" key="1"/>
<evidence type="ECO:0000305" key="2"/>
<keyword id="KW-0131">Cell cycle</keyword>
<keyword id="KW-0132">Cell division</keyword>
<keyword id="KW-0133">Cell shape</keyword>
<keyword id="KW-0961">Cell wall biogenesis/degradation</keyword>
<keyword id="KW-0963">Cytoplasm</keyword>
<keyword id="KW-0274">FAD</keyword>
<keyword id="KW-0285">Flavoprotein</keyword>
<keyword id="KW-0521">NADP</keyword>
<keyword id="KW-0560">Oxidoreductase</keyword>
<keyword id="KW-0573">Peptidoglycan synthesis</keyword>
<keyword id="KW-1185">Reference proteome</keyword>
<sequence>MEQLVNELIQANVGRVLVDEPLARYTTMKIGGPADILIVPKRVAGIEKTLQLVKKYKTKWTVIGRGSNLLVSDLGIEGVVIRLGEGLDHLEVEKHRVRVGGGYPLIKLSTLLSRQGLAGLEFASGIPGSVGGAVYMNAGAHKSDISNILSKALILFEDGTIDWLTHGEMEFSYRTSVLQTKRPGIVLEAEFQLQIGERERIVSVMQKNKDYRRETQPWNHPCAGSVFRNPTPYFAGDLIEKAGLRGYQIGGAQISEMHGNFIINTGGASAQDVLSLIALIKQTIKDKFGVEMHTEVEIIGR</sequence>
<accession>Q81WD1</accession>
<accession>Q6HUH7</accession>
<accession>Q6KNR3</accession>
<feature type="chain" id="PRO_0000179172" description="UDP-N-acetylenolpyruvoylglucosamine reductase 1">
    <location>
        <begin position="1"/>
        <end position="301"/>
    </location>
</feature>
<feature type="domain" description="FAD-binding PCMH-type">
    <location>
        <begin position="29"/>
        <end position="196"/>
    </location>
</feature>
<feature type="active site" evidence="1">
    <location>
        <position position="174"/>
    </location>
</feature>
<feature type="active site" description="Proton donor" evidence="1">
    <location>
        <position position="225"/>
    </location>
</feature>
<feature type="active site" evidence="1">
    <location>
        <position position="295"/>
    </location>
</feature>
<protein>
    <recommendedName>
        <fullName>UDP-N-acetylenolpyruvoylglucosamine reductase 1</fullName>
        <ecNumber>1.3.1.98</ecNumber>
    </recommendedName>
    <alternativeName>
        <fullName>UDP-N-acetylmuramate dehydrogenase 1</fullName>
    </alternativeName>
</protein>